<proteinExistence type="inferred from homology"/>
<sequence length="330" mass="35402">MKIAIDAMGGDHAPKAVVLGAMKAIKEYSDLHITLVGKEEEIRQYLTSEERITILHTDEKIESTDEPVRAVRRKKQASMVLAAQQVKDGVADACISAGSTGALMAAGLFVVGRMEGIERPALSPTMPTVDGEGFVMLDVGANVDAKPIHLYQYAVMGSVYAEKVRGIKNPRVGLLNVGTEDGKGNELSKQVFAMLKDAPINFVGNVESRDLLQGVADVVVCDGFTGNVALKSLEGTALALFSMLKEQLMSSFTSKLAAAVLKPKLMVLKDKMDYSEYGGAALFGLKAPVIKAHGSSNDQSIFSAIRQTREMVAKEVIPTISSVMEKEPLQ</sequence>
<feature type="chain" id="PRO_1000116373" description="Phosphate acyltransferase">
    <location>
        <begin position="1"/>
        <end position="330"/>
    </location>
</feature>
<comment type="function">
    <text evidence="1">Catalyzes the reversible formation of acyl-phosphate (acyl-PO(4)) from acyl-[acyl-carrier-protein] (acyl-ACP). This enzyme utilizes acyl-ACP as fatty acyl donor, but not acyl-CoA.</text>
</comment>
<comment type="catalytic activity">
    <reaction evidence="1">
        <text>a fatty acyl-[ACP] + phosphate = an acyl phosphate + holo-[ACP]</text>
        <dbReference type="Rhea" id="RHEA:42292"/>
        <dbReference type="Rhea" id="RHEA-COMP:9685"/>
        <dbReference type="Rhea" id="RHEA-COMP:14125"/>
        <dbReference type="ChEBI" id="CHEBI:43474"/>
        <dbReference type="ChEBI" id="CHEBI:59918"/>
        <dbReference type="ChEBI" id="CHEBI:64479"/>
        <dbReference type="ChEBI" id="CHEBI:138651"/>
        <dbReference type="EC" id="2.3.1.274"/>
    </reaction>
</comment>
<comment type="pathway">
    <text evidence="1">Lipid metabolism; phospholipid metabolism.</text>
</comment>
<comment type="subunit">
    <text evidence="1">Homodimer. Probably interacts with PlsY.</text>
</comment>
<comment type="subcellular location">
    <subcellularLocation>
        <location evidence="1">Cytoplasm</location>
    </subcellularLocation>
    <text evidence="1">Associated with the membrane possibly through PlsY.</text>
</comment>
<comment type="similarity">
    <text evidence="1">Belongs to the PlsX family.</text>
</comment>
<evidence type="ECO:0000255" key="1">
    <source>
        <dbReference type="HAMAP-Rule" id="MF_00019"/>
    </source>
</evidence>
<organism>
    <name type="scientific">Bacillus cereus (strain AH187)</name>
    <dbReference type="NCBI Taxonomy" id="405534"/>
    <lineage>
        <taxon>Bacteria</taxon>
        <taxon>Bacillati</taxon>
        <taxon>Bacillota</taxon>
        <taxon>Bacilli</taxon>
        <taxon>Bacillales</taxon>
        <taxon>Bacillaceae</taxon>
        <taxon>Bacillus</taxon>
        <taxon>Bacillus cereus group</taxon>
    </lineage>
</organism>
<protein>
    <recommendedName>
        <fullName evidence="1">Phosphate acyltransferase</fullName>
        <ecNumber evidence="1">2.3.1.274</ecNumber>
    </recommendedName>
    <alternativeName>
        <fullName evidence="1">Acyl-ACP phosphotransacylase</fullName>
    </alternativeName>
    <alternativeName>
        <fullName evidence="1">Acyl-[acyl-carrier-protein]--phosphate acyltransferase</fullName>
    </alternativeName>
    <alternativeName>
        <fullName evidence="1">Phosphate-acyl-ACP acyltransferase</fullName>
    </alternativeName>
</protein>
<accession>B7HLI6</accession>
<keyword id="KW-0963">Cytoplasm</keyword>
<keyword id="KW-0444">Lipid biosynthesis</keyword>
<keyword id="KW-0443">Lipid metabolism</keyword>
<keyword id="KW-0594">Phospholipid biosynthesis</keyword>
<keyword id="KW-1208">Phospholipid metabolism</keyword>
<keyword id="KW-0808">Transferase</keyword>
<reference key="1">
    <citation type="submission" date="2008-10" db="EMBL/GenBank/DDBJ databases">
        <title>Genome sequence of Bacillus cereus AH187.</title>
        <authorList>
            <person name="Dodson R.J."/>
            <person name="Durkin A.S."/>
            <person name="Rosovitz M.J."/>
            <person name="Rasko D.A."/>
            <person name="Kolsto A.B."/>
            <person name="Okstad O.A."/>
            <person name="Ravel J."/>
            <person name="Sutton G."/>
        </authorList>
    </citation>
    <scope>NUCLEOTIDE SEQUENCE [LARGE SCALE GENOMIC DNA]</scope>
    <source>
        <strain>AH187</strain>
    </source>
</reference>
<name>PLSX_BACC7</name>
<dbReference type="EC" id="2.3.1.274" evidence="1"/>
<dbReference type="EMBL" id="CP001177">
    <property type="protein sequence ID" value="ACJ78459.1"/>
    <property type="molecule type" value="Genomic_DNA"/>
</dbReference>
<dbReference type="SMR" id="B7HLI6"/>
<dbReference type="KEGG" id="bcr:BCAH187_A3901"/>
<dbReference type="HOGENOM" id="CLU_039379_1_1_9"/>
<dbReference type="UniPathway" id="UPA00085"/>
<dbReference type="Proteomes" id="UP000002214">
    <property type="component" value="Chromosome"/>
</dbReference>
<dbReference type="GO" id="GO:0005737">
    <property type="term" value="C:cytoplasm"/>
    <property type="evidence" value="ECO:0007669"/>
    <property type="project" value="UniProtKB-SubCell"/>
</dbReference>
<dbReference type="GO" id="GO:0043811">
    <property type="term" value="F:phosphate:acyl-[acyl carrier protein] acyltransferase activity"/>
    <property type="evidence" value="ECO:0007669"/>
    <property type="project" value="UniProtKB-UniRule"/>
</dbReference>
<dbReference type="GO" id="GO:0006633">
    <property type="term" value="P:fatty acid biosynthetic process"/>
    <property type="evidence" value="ECO:0007669"/>
    <property type="project" value="UniProtKB-UniRule"/>
</dbReference>
<dbReference type="GO" id="GO:0008654">
    <property type="term" value="P:phospholipid biosynthetic process"/>
    <property type="evidence" value="ECO:0007669"/>
    <property type="project" value="UniProtKB-KW"/>
</dbReference>
<dbReference type="Gene3D" id="3.40.718.10">
    <property type="entry name" value="Isopropylmalate Dehydrogenase"/>
    <property type="match status" value="1"/>
</dbReference>
<dbReference type="HAMAP" id="MF_00019">
    <property type="entry name" value="PlsX"/>
    <property type="match status" value="1"/>
</dbReference>
<dbReference type="InterPro" id="IPR003664">
    <property type="entry name" value="FA_synthesis"/>
</dbReference>
<dbReference type="InterPro" id="IPR012281">
    <property type="entry name" value="Phospholipid_synth_PlsX-like"/>
</dbReference>
<dbReference type="NCBIfam" id="TIGR00182">
    <property type="entry name" value="plsX"/>
    <property type="match status" value="1"/>
</dbReference>
<dbReference type="PANTHER" id="PTHR30100">
    <property type="entry name" value="FATTY ACID/PHOSPHOLIPID SYNTHESIS PROTEIN PLSX"/>
    <property type="match status" value="1"/>
</dbReference>
<dbReference type="PANTHER" id="PTHR30100:SF1">
    <property type="entry name" value="PHOSPHATE ACYLTRANSFERASE"/>
    <property type="match status" value="1"/>
</dbReference>
<dbReference type="Pfam" id="PF02504">
    <property type="entry name" value="FA_synthesis"/>
    <property type="match status" value="1"/>
</dbReference>
<dbReference type="PIRSF" id="PIRSF002465">
    <property type="entry name" value="Phsphlp_syn_PlsX"/>
    <property type="match status" value="1"/>
</dbReference>
<dbReference type="SUPFAM" id="SSF53659">
    <property type="entry name" value="Isocitrate/Isopropylmalate dehydrogenase-like"/>
    <property type="match status" value="1"/>
</dbReference>
<gene>
    <name evidence="1" type="primary">plsX</name>
    <name type="ordered locus">BCAH187_A3901</name>
</gene>